<accession>B1LQL8</accession>
<protein>
    <recommendedName>
        <fullName evidence="1">L-ribulose-5-phosphate 4-epimerase UlaF</fullName>
        <ecNumber evidence="1">5.1.3.4</ecNumber>
    </recommendedName>
    <alternativeName>
        <fullName evidence="1">L-ascorbate utilization protein F</fullName>
    </alternativeName>
    <alternativeName>
        <fullName evidence="1">Phosphoribulose isomerase</fullName>
    </alternativeName>
</protein>
<evidence type="ECO:0000255" key="1">
    <source>
        <dbReference type="HAMAP-Rule" id="MF_01952"/>
    </source>
</evidence>
<feature type="chain" id="PRO_1000188849" description="L-ribulose-5-phosphate 4-epimerase UlaF">
    <location>
        <begin position="1"/>
        <end position="228"/>
    </location>
</feature>
<feature type="active site" description="Proton donor/acceptor" evidence="1">
    <location>
        <position position="118"/>
    </location>
</feature>
<feature type="active site" description="Proton donor/acceptor" evidence="1">
    <location>
        <position position="225"/>
    </location>
</feature>
<feature type="binding site" evidence="1">
    <location>
        <begin position="26"/>
        <end position="27"/>
    </location>
    <ligand>
        <name>substrate</name>
    </ligand>
</feature>
<feature type="binding site" evidence="1">
    <location>
        <begin position="43"/>
        <end position="44"/>
    </location>
    <ligand>
        <name>substrate</name>
    </ligand>
</feature>
<feature type="binding site" evidence="1">
    <location>
        <begin position="72"/>
        <end position="73"/>
    </location>
    <ligand>
        <name>substrate</name>
    </ligand>
</feature>
<feature type="binding site" evidence="1">
    <location>
        <position position="74"/>
    </location>
    <ligand>
        <name>Zn(2+)</name>
        <dbReference type="ChEBI" id="CHEBI:29105"/>
    </ligand>
</feature>
<feature type="binding site" evidence="1">
    <location>
        <position position="93"/>
    </location>
    <ligand>
        <name>Zn(2+)</name>
        <dbReference type="ChEBI" id="CHEBI:29105"/>
    </ligand>
</feature>
<feature type="binding site" evidence="1">
    <location>
        <position position="95"/>
    </location>
    <ligand>
        <name>Zn(2+)</name>
        <dbReference type="ChEBI" id="CHEBI:29105"/>
    </ligand>
</feature>
<feature type="binding site" evidence="1">
    <location>
        <position position="167"/>
    </location>
    <ligand>
        <name>Zn(2+)</name>
        <dbReference type="ChEBI" id="CHEBI:29105"/>
    </ligand>
</feature>
<organism>
    <name type="scientific">Escherichia coli (strain SMS-3-5 / SECEC)</name>
    <dbReference type="NCBI Taxonomy" id="439855"/>
    <lineage>
        <taxon>Bacteria</taxon>
        <taxon>Pseudomonadati</taxon>
        <taxon>Pseudomonadota</taxon>
        <taxon>Gammaproteobacteria</taxon>
        <taxon>Enterobacterales</taxon>
        <taxon>Enterobacteriaceae</taxon>
        <taxon>Escherichia</taxon>
    </lineage>
</organism>
<name>ULAF_ECOSM</name>
<comment type="function">
    <text evidence="1">Catalyzes the isomerization of L-ribulose 5-phosphate to D-xylulose 5-phosphate. Is involved in the anaerobic L-ascorbate utilization.</text>
</comment>
<comment type="catalytic activity">
    <reaction evidence="1">
        <text>L-ribulose 5-phosphate = D-xylulose 5-phosphate</text>
        <dbReference type="Rhea" id="RHEA:22368"/>
        <dbReference type="ChEBI" id="CHEBI:57737"/>
        <dbReference type="ChEBI" id="CHEBI:58226"/>
        <dbReference type="EC" id="5.1.3.4"/>
    </reaction>
</comment>
<comment type="cofactor">
    <cofactor evidence="1">
        <name>Zn(2+)</name>
        <dbReference type="ChEBI" id="CHEBI:29105"/>
    </cofactor>
    <text evidence="1">Binds 1 zinc ion per subunit.</text>
</comment>
<comment type="pathway">
    <text evidence="1">Cofactor degradation; L-ascorbate degradation; D-xylulose 5-phosphate from L-ascorbate: step 4/4.</text>
</comment>
<comment type="induction">
    <text evidence="1">Induced by L-ascorbate. Repressed by UlaR.</text>
</comment>
<comment type="similarity">
    <text evidence="1">Belongs to the aldolase class II family. AraD/FucA subfamily.</text>
</comment>
<keyword id="KW-0119">Carbohydrate metabolism</keyword>
<keyword id="KW-0413">Isomerase</keyword>
<keyword id="KW-0479">Metal-binding</keyword>
<keyword id="KW-0862">Zinc</keyword>
<dbReference type="EC" id="5.1.3.4" evidence="1"/>
<dbReference type="EMBL" id="CP000970">
    <property type="protein sequence ID" value="ACB17376.1"/>
    <property type="molecule type" value="Genomic_DNA"/>
</dbReference>
<dbReference type="RefSeq" id="WP_001170789.1">
    <property type="nucleotide sequence ID" value="NC_010498.1"/>
</dbReference>
<dbReference type="SMR" id="B1LQL8"/>
<dbReference type="KEGG" id="ecm:EcSMS35_4669"/>
<dbReference type="HOGENOM" id="CLU_006033_5_0_6"/>
<dbReference type="UniPathway" id="UPA00263">
    <property type="reaction ID" value="UER00380"/>
</dbReference>
<dbReference type="Proteomes" id="UP000007011">
    <property type="component" value="Chromosome"/>
</dbReference>
<dbReference type="GO" id="GO:0005829">
    <property type="term" value="C:cytosol"/>
    <property type="evidence" value="ECO:0007669"/>
    <property type="project" value="TreeGrafter"/>
</dbReference>
<dbReference type="GO" id="GO:0016832">
    <property type="term" value="F:aldehyde-lyase activity"/>
    <property type="evidence" value="ECO:0007669"/>
    <property type="project" value="TreeGrafter"/>
</dbReference>
<dbReference type="GO" id="GO:0008742">
    <property type="term" value="F:L-ribulose-phosphate 4-epimerase activity"/>
    <property type="evidence" value="ECO:0007669"/>
    <property type="project" value="UniProtKB-UniRule"/>
</dbReference>
<dbReference type="GO" id="GO:0008270">
    <property type="term" value="F:zinc ion binding"/>
    <property type="evidence" value="ECO:0007669"/>
    <property type="project" value="UniProtKB-UniRule"/>
</dbReference>
<dbReference type="GO" id="GO:0019854">
    <property type="term" value="P:L-ascorbic acid catabolic process"/>
    <property type="evidence" value="ECO:0007669"/>
    <property type="project" value="UniProtKB-UniRule"/>
</dbReference>
<dbReference type="GO" id="GO:0019323">
    <property type="term" value="P:pentose catabolic process"/>
    <property type="evidence" value="ECO:0007669"/>
    <property type="project" value="TreeGrafter"/>
</dbReference>
<dbReference type="CDD" id="cd00398">
    <property type="entry name" value="Aldolase_II"/>
    <property type="match status" value="1"/>
</dbReference>
<dbReference type="FunFam" id="3.40.225.10:FF:000001">
    <property type="entry name" value="L-ribulose-5-phosphate 4-epimerase UlaF"/>
    <property type="match status" value="1"/>
</dbReference>
<dbReference type="Gene3D" id="3.40.225.10">
    <property type="entry name" value="Class II aldolase/adducin N-terminal domain"/>
    <property type="match status" value="1"/>
</dbReference>
<dbReference type="HAMAP" id="MF_01952">
    <property type="entry name" value="UlaF"/>
    <property type="match status" value="1"/>
</dbReference>
<dbReference type="InterPro" id="IPR050197">
    <property type="entry name" value="Aldolase_class_II_sugar_metab"/>
</dbReference>
<dbReference type="InterPro" id="IPR001303">
    <property type="entry name" value="Aldolase_II/adducin_N"/>
</dbReference>
<dbReference type="InterPro" id="IPR036409">
    <property type="entry name" value="Aldolase_II/adducin_N_sf"/>
</dbReference>
<dbReference type="InterPro" id="IPR023499">
    <property type="entry name" value="UlaF"/>
</dbReference>
<dbReference type="NCBIfam" id="NF006047">
    <property type="entry name" value="PRK08193.1"/>
    <property type="match status" value="1"/>
</dbReference>
<dbReference type="NCBIfam" id="NF009003">
    <property type="entry name" value="PRK12348.1"/>
    <property type="match status" value="1"/>
</dbReference>
<dbReference type="PANTHER" id="PTHR22789">
    <property type="entry name" value="FUCULOSE PHOSPHATE ALDOLASE"/>
    <property type="match status" value="1"/>
</dbReference>
<dbReference type="PANTHER" id="PTHR22789:SF9">
    <property type="entry name" value="L-RIBULOSE-5-PHOSPHATE 4-EPIMERASE ULAF"/>
    <property type="match status" value="1"/>
</dbReference>
<dbReference type="Pfam" id="PF00596">
    <property type="entry name" value="Aldolase_II"/>
    <property type="match status" value="1"/>
</dbReference>
<dbReference type="SMART" id="SM01007">
    <property type="entry name" value="Aldolase_II"/>
    <property type="match status" value="1"/>
</dbReference>
<dbReference type="SUPFAM" id="SSF53639">
    <property type="entry name" value="AraD/HMP-PK domain-like"/>
    <property type="match status" value="1"/>
</dbReference>
<proteinExistence type="inferred from homology"/>
<reference key="1">
    <citation type="journal article" date="2008" name="J. Bacteriol.">
        <title>Insights into the environmental resistance gene pool from the genome sequence of the multidrug-resistant environmental isolate Escherichia coli SMS-3-5.</title>
        <authorList>
            <person name="Fricke W.F."/>
            <person name="Wright M.S."/>
            <person name="Lindell A.H."/>
            <person name="Harkins D.M."/>
            <person name="Baker-Austin C."/>
            <person name="Ravel J."/>
            <person name="Stepanauskas R."/>
        </authorList>
    </citation>
    <scope>NUCLEOTIDE SEQUENCE [LARGE SCALE GENOMIC DNA]</scope>
    <source>
        <strain>SMS-3-5 / SECEC</strain>
    </source>
</reference>
<gene>
    <name evidence="1" type="primary">ulaF</name>
    <name type="ordered locus">EcSMS35_4669</name>
</gene>
<sequence>MQKLKQQVFEANMDLPRYGLVTFTWGNVSAIDRERGLVVIKPSGVAYETMKAADMVVVDMSGKVVEGEYRPSSDTATHLELYRRYPSLGGIVHTHSTHATAWAQAGLAIPALGTTHADYFFGDIPCTRGLSEEEVQGEYELNTGKVIIETLGDAEPLHTPGIVVYQHGPFAWGKDAHDAVHNAVVMEEVAKMAWIARSINPQLNHIDSYLMNKHFMRKHGPNAYYGQK</sequence>